<organism>
    <name type="scientific">Avian reticuloendotheliosis virus</name>
    <dbReference type="NCBI Taxonomy" id="11636"/>
    <lineage>
        <taxon>Viruses</taxon>
        <taxon>Riboviria</taxon>
        <taxon>Pararnavirae</taxon>
        <taxon>Artverviricota</taxon>
        <taxon>Revtraviricetes</taxon>
        <taxon>Ortervirales</taxon>
        <taxon>Retroviridae</taxon>
        <taxon>Orthoretrovirinae</taxon>
        <taxon>Gammaretrovirus</taxon>
    </lineage>
</organism>
<protein>
    <recommendedName>
        <fullName>Gag-Pol polyprotein</fullName>
    </recommendedName>
    <component>
        <recommendedName>
            <fullName>Protease</fullName>
            <ecNumber>3.4.23.-</ecNumber>
        </recommendedName>
    </component>
    <component>
        <recommendedName>
            <fullName>Reverse transcriptase/ribonuclease H</fullName>
            <shortName>RT</shortName>
            <ecNumber evidence="3">2.7.7.49</ecNumber>
            <ecNumber evidence="3">2.7.7.7</ecNumber>
            <ecNumber evidence="4">3.1.26.4</ecNumber>
        </recommendedName>
    </component>
    <component>
        <recommendedName>
            <fullName>Integrase</fullName>
            <shortName>IN</shortName>
            <ecNumber evidence="7">2.7.7.-</ecNumber>
            <ecNumber evidence="7">3.1.-.-</ecNumber>
        </recommendedName>
    </component>
</protein>
<comment type="function">
    <molecule>Protease</molecule>
    <text evidence="2">The aspartyl protease mediates proteolytic cleavages of Gag and Gag-Pol polyproteins during or shortly after the release of the virion from the plasma membrane. Cleavages take place as an ordered, step-wise cascade to yield mature proteins. This process is called maturation. Displays maximal activity during the budding process just prior to particle release from the cell.</text>
</comment>
<comment type="function">
    <molecule>Reverse transcriptase/ribonuclease H</molecule>
    <text evidence="3">RT is a multifunctional enzyme that converts the viral dimeric RNA genome into dsDNA in the cytoplasm, shortly after virus entry into the cell. This enzyme displays a DNA polymerase activity that can copy either DNA or RNA templates, and a ribonuclease H (RNase H) activity that cleaves the RNA strand of RNA-DNA heteroduplexes in a partially processive 3' to 5' endonucleasic mode. Conversion of viral genomic RNA into dsDNA requires many steps. A tRNA binds to the primer-binding site (PBS) situated at the 5' end of the viral RNA. RT uses the 3' end of the tRNA primer to perfom a short round of RNA-dependent minus-strand DNA synthesis. The reading proceeds through the U5 region and ends after the repeated (R) region which is present at both ends of viral RNA. The portion of the RNA-DNA heteroduplex is digested by the RNase H, resulting in a ssDNA product attached to the tRNA primer. This ssDNA/tRNA hybridizes with the identical R region situated at the 3' end of viral RNA. This template exchange, known as minus-strand DNA strong stop transfer, can be either intra- or intermolecular. RT uses the 3' end of this newly synthesized short ssDNA to perfom the RNA-dependent minus-strand DNA synthesis of the whole template. RNase H digests the RNA template except for a polypurine tract (PPT) situated at the 5' end of the genome. It is not clear if both polymerase and RNase H activities are simultaneous. RNase H probably can proceed both in a polymerase-dependent (RNA cut into small fragments by the same RT performing DNA synthesis) and a polymerase-independent mode (cleavage of remaining RNA fragments by free RTs). Secondly, RT performs DNA-directed plus-strand DNA synthesis using the PPT that has not been removed by RNase H as primers. PPT and tRNA primers are then removed by RNase H. The 3' and 5' ssDNA PBS regions hybridize to form a circular dsDNA intermediate. Strand displacement synthesis by RT to the PBS and PPT ends produces a blunt ended, linear dsDNA copy of the viral genome that includes long terminal repeats (LTRs) at both ends.</text>
</comment>
<comment type="function">
    <molecule>Integrase</molecule>
    <text evidence="9">Catalyzes viral DNA integration into the host chromosome, by performing a series of DNA cutting and joining reactions.</text>
</comment>
<comment type="catalytic activity">
    <reaction evidence="3">
        <text>DNA(n) + a 2'-deoxyribonucleoside 5'-triphosphate = DNA(n+1) + diphosphate</text>
        <dbReference type="Rhea" id="RHEA:22508"/>
        <dbReference type="Rhea" id="RHEA-COMP:17339"/>
        <dbReference type="Rhea" id="RHEA-COMP:17340"/>
        <dbReference type="ChEBI" id="CHEBI:33019"/>
        <dbReference type="ChEBI" id="CHEBI:61560"/>
        <dbReference type="ChEBI" id="CHEBI:173112"/>
        <dbReference type="EC" id="2.7.7.49"/>
    </reaction>
</comment>
<comment type="catalytic activity">
    <reaction evidence="3">
        <text>DNA(n) + a 2'-deoxyribonucleoside 5'-triphosphate = DNA(n+1) + diphosphate</text>
        <dbReference type="Rhea" id="RHEA:22508"/>
        <dbReference type="Rhea" id="RHEA-COMP:17339"/>
        <dbReference type="Rhea" id="RHEA-COMP:17340"/>
        <dbReference type="ChEBI" id="CHEBI:33019"/>
        <dbReference type="ChEBI" id="CHEBI:61560"/>
        <dbReference type="ChEBI" id="CHEBI:173112"/>
        <dbReference type="EC" id="2.7.7.7"/>
    </reaction>
</comment>
<comment type="catalytic activity">
    <reaction evidence="4">
        <text>Endonucleolytic cleavage to 5'-phosphomonoester.</text>
        <dbReference type="EC" id="3.1.26.4"/>
    </reaction>
</comment>
<comment type="cofactor">
    <cofactor evidence="3">
        <name>Mg(2+)</name>
        <dbReference type="ChEBI" id="CHEBI:18420"/>
    </cofactor>
    <text evidence="3">The RT polymerase active site binds 2 magnesium ions.</text>
</comment>
<comment type="cofactor">
    <cofactor evidence="7">
        <name>Mn(2+)</name>
        <dbReference type="ChEBI" id="CHEBI:29035"/>
    </cofactor>
    <cofactor evidence="7">
        <name>Mg(2+)</name>
        <dbReference type="ChEBI" id="CHEBI:18420"/>
    </cofactor>
    <text>Magnesium or manganese ions are required for integrase activity.</text>
</comment>
<comment type="subunit">
    <molecule>Reverse transcriptase/ribonuclease H</molecule>
    <text evidence="3">The reverse transcriptase is a monomer.</text>
</comment>
<comment type="PTM">
    <molecule>Gag-Pol polyprotein</molecule>
    <text evidence="8">Specific enzymatic cleavages in vivo yield mature proteins.</text>
</comment>
<comment type="miscellaneous">
    <molecule>Reverse transcriptase/ribonuclease H</molecule>
    <text evidence="3">The reverse transcriptase is an error-prone enzyme that lacks a proof-reading function. High mutations rate is a direct consequence of this characteristic. RT also displays frequent template switching leading to high recombination rate. Recombination mostly occurs between homologous regions of the two copackaged RNA genomes. If these two RNA molecules derive from different viral strains, reverse transcription will give rise to highly recombinated proviral DNAs.</text>
</comment>
<comment type="miscellaneous">
    <text>Strain A is a helper virus of the strain T.</text>
</comment>
<comment type="similarity">
    <text evidence="8">Belongs to the retroviral Pol polyprotein family.</text>
</comment>
<comment type="sequence caution" evidence="8">
    <conflict type="frameshift">
        <sequence resource="EMBL-CDS" id="CAA25685"/>
    </conflict>
</comment>
<sequence length="1152" mass="128060">MSKESVAIIGATGNIRNYPKSEGRLVDLGRGLVTHSFLVIPECPDPLLGRDLLQKLRATISFTGEGPPEIRTEGKLLVTAPLEEEYRLFLEAPIQNVTLLEQWKREIPKVWAEINPPGLASTQAPIHVQLLSTALPVRVRQYPITLEAKRSLRETIRKFRAAGILRPVHSPWNTPLLPVRKSGTSEYRMVQDLREVNKRVETIHPTVPNPYTLLSLLPPDRIWYSVLDLKDAFFCIPLAPESQLIFAFEWADAEEGESGQLTWTRLPQGFKNSPTLFDEALNRDLQGFRLDHPSVSLLQYVDDLLIAADTQAACLSATRDLLMTLAELGYRVSGKKAQLCQEEVTYLGFKIHKGSRSLSNSRTQAILQIPVPKTKRQVREFLGTIGYCRLWIPGFAELAQPLYAATRGGNDPLVWGEKEEEAFQSLKLALTQPPALALPSLDKPFQLFVEETSGAAKGVLTQALGPWKRPVAYLSKRLDPVAAGWPRCLRAIAAAALLTREASKLTFGQDIEITSSHNLESLLRSPPDKWLTNARITQYQVLLLDPPRVRFKQTAALNPATLLPETDDTLPIHHCLDTLDSLTSTRPDLTDQPLAQAEATLFTDGSSYIRDGKRYAGAAVVTLDSVIWAEPLPIGTSAQKAELIALTKALEWSKDKSVNIYTDSRYAFATLHVHGMIYRERGLLTAGGKAIKNAPEILALLTAVWLPKRVAVMHCKGHQKDDAPTSTGNRRADEVAREVAIRPLSTQATISDAPDMPDTETPQYSNVEEALGHRLRGTKDPAGWWHLPDGRLLLPRAVGRKVLEQTHRATHLGESKLTELVRKHYLICGIYRAARDITTRCVACAQVNPGAAPVEKGLNSRIRGAAPGEHWEVDFTEMITAKGGYKYLLVLVDTFSGWVEAYPAKRETSQVVIKHLIHDIIPRFGLPVQIGSDNGPAFVAKVTQQLCEALNVSWKLHCAYRPQSSGQVERMNRTLKETIAKLRIETGGDWVSLLPQALLRARCTPGREGLSPFEILYGLKPPVVPRVGCDKLASITNQTLLKSLQALQATRSLARATLRDQLPQKEAQQDRTPLFQPGDLVFVKKHDFQQLGPRWDGPYTVVLSTPTAVKVAGKTPWIHYSRLKKAPDNQEEWTVSPTSDPLRVKLTRRAKP</sequence>
<evidence type="ECO:0000250" key="1">
    <source>
        <dbReference type="UniProtKB" id="P03355"/>
    </source>
</evidence>
<evidence type="ECO:0000255" key="2">
    <source>
        <dbReference type="PROSITE-ProRule" id="PRU00275"/>
    </source>
</evidence>
<evidence type="ECO:0000255" key="3">
    <source>
        <dbReference type="PROSITE-ProRule" id="PRU00405"/>
    </source>
</evidence>
<evidence type="ECO:0000255" key="4">
    <source>
        <dbReference type="PROSITE-ProRule" id="PRU00408"/>
    </source>
</evidence>
<evidence type="ECO:0000255" key="5">
    <source>
        <dbReference type="PROSITE-ProRule" id="PRU00457"/>
    </source>
</evidence>
<evidence type="ECO:0000256" key="6">
    <source>
        <dbReference type="SAM" id="MobiDB-lite"/>
    </source>
</evidence>
<evidence type="ECO:0000269" key="7">
    <source>
    </source>
</evidence>
<evidence type="ECO:0000305" key="8"/>
<evidence type="ECO:0000305" key="9">
    <source>
    </source>
</evidence>
<reference key="1">
    <citation type="journal article" date="2006" name="Virus Res.">
        <title>Phylogenetic analyses indicate little variation among reticuloendotheliosis viruses infecting avian species, including the endangered Attwater's prairie chicken.</title>
        <authorList>
            <person name="Bohls R.L."/>
            <person name="Linares J.A."/>
            <person name="Gross S.L."/>
            <person name="Ferro P.J."/>
            <person name="Silvy N.J."/>
            <person name="Collisson E.W."/>
        </authorList>
    </citation>
    <scope>NUCLEOTIDE SEQUENCE [GENOMIC RNA]</scope>
    <source>
        <strain>A</strain>
    </source>
</reference>
<reference key="2">
    <citation type="journal article" date="1984" name="J. Virol.">
        <title>Nucleic acid sequences of the oncogene v-rel in reticuloendotheliosis virus strain T and its cellular homolog, the proto-oncogene c-rel.</title>
        <authorList>
            <person name="Wilhelmsen K.C."/>
            <person name="Eggleton K."/>
            <person name="Temin H.M."/>
        </authorList>
    </citation>
    <scope>NUCLEOTIDE SEQUENCE [GENOMIC RNA] OF 680-1152</scope>
    <source>
        <strain>A</strain>
    </source>
</reference>
<reference key="3">
    <citation type="journal article" date="2013" name="PLoS ONE">
        <title>Biochemical characterization of novel retroviral integrase proteins.</title>
        <authorList>
            <person name="Ballandras-Colas A."/>
            <person name="Naraharisetty H."/>
            <person name="Li X."/>
            <person name="Serrao E."/>
            <person name="Engelman A."/>
        </authorList>
    </citation>
    <scope>CATALYTIC ACTIVITY (INTEGRASE)</scope>
    <scope>CHARACTERIZATION (INTEGRASE)</scope>
    <scope>COFACTOR (INTEGRASE)</scope>
    <scope>FUNCTION (INTEGRASE)</scope>
</reference>
<organismHost>
    <name type="scientific">Galliformes</name>
    <dbReference type="NCBI Taxonomy" id="8976"/>
</organismHost>
<accession>P03360</accession>
<accession>Q2Q1R2</accession>
<keyword id="KW-0229">DNA integration</keyword>
<keyword id="KW-0233">DNA recombination</keyword>
<keyword id="KW-0238">DNA-binding</keyword>
<keyword id="KW-0239">DNA-directed DNA polymerase</keyword>
<keyword id="KW-0255">Endonuclease</keyword>
<keyword id="KW-0378">Hydrolase</keyword>
<keyword id="KW-0460">Magnesium</keyword>
<keyword id="KW-0479">Metal-binding</keyword>
<keyword id="KW-0511">Multifunctional enzyme</keyword>
<keyword id="KW-0540">Nuclease</keyword>
<keyword id="KW-0548">Nucleotidyltransferase</keyword>
<keyword id="KW-0694">RNA-binding</keyword>
<keyword id="KW-0695">RNA-directed DNA polymerase</keyword>
<keyword id="KW-0808">Transferase</keyword>
<keyword id="KW-1179">Viral genome integration</keyword>
<keyword id="KW-1160">Virus entry into host cell</keyword>
<proteinExistence type="evidence at protein level"/>
<name>POL_AVIRE</name>
<gene>
    <name type="primary">pol</name>
</gene>
<dbReference type="EC" id="3.4.23.-"/>
<dbReference type="EC" id="2.7.7.49" evidence="3"/>
<dbReference type="EC" id="2.7.7.7" evidence="3"/>
<dbReference type="EC" id="3.1.26.4" evidence="4"/>
<dbReference type="EC" id="2.7.7.-" evidence="7"/>
<dbReference type="EC" id="3.1.-.-" evidence="7"/>
<dbReference type="EMBL" id="DQ237900">
    <property type="protein sequence ID" value="ABC26818.1"/>
    <property type="molecule type" value="Genomic_DNA"/>
</dbReference>
<dbReference type="EMBL" id="X01455">
    <property type="protein sequence ID" value="CAA25685.1"/>
    <property type="status" value="ALT_FRAME"/>
    <property type="molecule type" value="Genomic_RNA"/>
</dbReference>
<dbReference type="PIR" id="A03959">
    <property type="entry name" value="A03959"/>
</dbReference>
<dbReference type="SMR" id="P03360"/>
<dbReference type="GO" id="GO:0004190">
    <property type="term" value="F:aspartic-type endopeptidase activity"/>
    <property type="evidence" value="ECO:0007669"/>
    <property type="project" value="InterPro"/>
</dbReference>
<dbReference type="GO" id="GO:0003677">
    <property type="term" value="F:DNA binding"/>
    <property type="evidence" value="ECO:0007669"/>
    <property type="project" value="UniProtKB-KW"/>
</dbReference>
<dbReference type="GO" id="GO:0003887">
    <property type="term" value="F:DNA-directed DNA polymerase activity"/>
    <property type="evidence" value="ECO:0007669"/>
    <property type="project" value="UniProtKB-KW"/>
</dbReference>
<dbReference type="GO" id="GO:0046872">
    <property type="term" value="F:metal ion binding"/>
    <property type="evidence" value="ECO:0007669"/>
    <property type="project" value="UniProtKB-KW"/>
</dbReference>
<dbReference type="GO" id="GO:0003723">
    <property type="term" value="F:RNA binding"/>
    <property type="evidence" value="ECO:0007669"/>
    <property type="project" value="UniProtKB-KW"/>
</dbReference>
<dbReference type="GO" id="GO:0003964">
    <property type="term" value="F:RNA-directed DNA polymerase activity"/>
    <property type="evidence" value="ECO:0007669"/>
    <property type="project" value="UniProtKB-KW"/>
</dbReference>
<dbReference type="GO" id="GO:0004523">
    <property type="term" value="F:RNA-DNA hybrid ribonuclease activity"/>
    <property type="evidence" value="ECO:0007669"/>
    <property type="project" value="UniProtKB-EC"/>
</dbReference>
<dbReference type="GO" id="GO:0015074">
    <property type="term" value="P:DNA integration"/>
    <property type="evidence" value="ECO:0007669"/>
    <property type="project" value="UniProtKB-KW"/>
</dbReference>
<dbReference type="GO" id="GO:0006310">
    <property type="term" value="P:DNA recombination"/>
    <property type="evidence" value="ECO:0007669"/>
    <property type="project" value="UniProtKB-KW"/>
</dbReference>
<dbReference type="GO" id="GO:0075713">
    <property type="term" value="P:establishment of integrated proviral latency"/>
    <property type="evidence" value="ECO:0007669"/>
    <property type="project" value="UniProtKB-KW"/>
</dbReference>
<dbReference type="GO" id="GO:0006508">
    <property type="term" value="P:proteolysis"/>
    <property type="evidence" value="ECO:0007669"/>
    <property type="project" value="InterPro"/>
</dbReference>
<dbReference type="GO" id="GO:0046718">
    <property type="term" value="P:symbiont entry into host cell"/>
    <property type="evidence" value="ECO:0007669"/>
    <property type="project" value="UniProtKB-KW"/>
</dbReference>
<dbReference type="GO" id="GO:0044826">
    <property type="term" value="P:viral genome integration into host DNA"/>
    <property type="evidence" value="ECO:0007669"/>
    <property type="project" value="UniProtKB-KW"/>
</dbReference>
<dbReference type="CDD" id="cd09273">
    <property type="entry name" value="RNase_HI_RT_Bel"/>
    <property type="match status" value="1"/>
</dbReference>
<dbReference type="CDD" id="cd03715">
    <property type="entry name" value="RT_ZFREV_like"/>
    <property type="match status" value="1"/>
</dbReference>
<dbReference type="FunFam" id="3.30.70.270:FF:000020">
    <property type="entry name" value="Transposon Tf2-6 polyprotein-like Protein"/>
    <property type="match status" value="1"/>
</dbReference>
<dbReference type="Gene3D" id="1.10.340.70">
    <property type="match status" value="1"/>
</dbReference>
<dbReference type="Gene3D" id="2.30.30.850">
    <property type="match status" value="1"/>
</dbReference>
<dbReference type="Gene3D" id="3.10.20.370">
    <property type="match status" value="1"/>
</dbReference>
<dbReference type="Gene3D" id="3.30.70.270">
    <property type="match status" value="2"/>
</dbReference>
<dbReference type="Gene3D" id="2.40.70.10">
    <property type="entry name" value="Acid Proteases"/>
    <property type="match status" value="1"/>
</dbReference>
<dbReference type="Gene3D" id="3.10.10.10">
    <property type="entry name" value="HIV Type 1 Reverse Transcriptase, subunit A, domain 1"/>
    <property type="match status" value="1"/>
</dbReference>
<dbReference type="Gene3D" id="3.30.420.10">
    <property type="entry name" value="Ribonuclease H-like superfamily/Ribonuclease H"/>
    <property type="match status" value="2"/>
</dbReference>
<dbReference type="InterPro" id="IPR043502">
    <property type="entry name" value="DNA/RNA_pol_sf"/>
</dbReference>
<dbReference type="InterPro" id="IPR001584">
    <property type="entry name" value="Integrase_cat-core"/>
</dbReference>
<dbReference type="InterPro" id="IPR040643">
    <property type="entry name" value="MLVIN_C"/>
</dbReference>
<dbReference type="InterPro" id="IPR001995">
    <property type="entry name" value="Peptidase_A2_cat"/>
</dbReference>
<dbReference type="InterPro" id="IPR021109">
    <property type="entry name" value="Peptidase_aspartic_dom_sf"/>
</dbReference>
<dbReference type="InterPro" id="IPR018061">
    <property type="entry name" value="Retropepsins"/>
</dbReference>
<dbReference type="InterPro" id="IPR043128">
    <property type="entry name" value="Rev_trsase/Diguanyl_cyclase"/>
</dbReference>
<dbReference type="InterPro" id="IPR012337">
    <property type="entry name" value="RNaseH-like_sf"/>
</dbReference>
<dbReference type="InterPro" id="IPR002156">
    <property type="entry name" value="RNaseH_domain"/>
</dbReference>
<dbReference type="InterPro" id="IPR036397">
    <property type="entry name" value="RNaseH_sf"/>
</dbReference>
<dbReference type="InterPro" id="IPR000477">
    <property type="entry name" value="RT_dom"/>
</dbReference>
<dbReference type="InterPro" id="IPR041577">
    <property type="entry name" value="RT_RNaseH_2"/>
</dbReference>
<dbReference type="InterPro" id="IPR051320">
    <property type="entry name" value="Viral_Replic_Matur_Polypro"/>
</dbReference>
<dbReference type="InterPro" id="IPR015416">
    <property type="entry name" value="Znf_H2C2_histone_UAS-bd"/>
</dbReference>
<dbReference type="PANTHER" id="PTHR33064:SF38">
    <property type="entry name" value="LRRGT00076-LIKE"/>
    <property type="match status" value="1"/>
</dbReference>
<dbReference type="PANTHER" id="PTHR33064">
    <property type="entry name" value="POL PROTEIN"/>
    <property type="match status" value="1"/>
</dbReference>
<dbReference type="Pfam" id="PF18697">
    <property type="entry name" value="MLVIN_C"/>
    <property type="match status" value="1"/>
</dbReference>
<dbReference type="Pfam" id="PF00075">
    <property type="entry name" value="RNase_H"/>
    <property type="match status" value="1"/>
</dbReference>
<dbReference type="Pfam" id="PF17919">
    <property type="entry name" value="RT_RNaseH_2"/>
    <property type="match status" value="1"/>
</dbReference>
<dbReference type="Pfam" id="PF00665">
    <property type="entry name" value="rve"/>
    <property type="match status" value="1"/>
</dbReference>
<dbReference type="Pfam" id="PF00077">
    <property type="entry name" value="RVP"/>
    <property type="match status" value="1"/>
</dbReference>
<dbReference type="Pfam" id="PF00078">
    <property type="entry name" value="RVT_1"/>
    <property type="match status" value="1"/>
</dbReference>
<dbReference type="Pfam" id="PF09337">
    <property type="entry name" value="zf-H2C2"/>
    <property type="match status" value="1"/>
</dbReference>
<dbReference type="SUPFAM" id="SSF50630">
    <property type="entry name" value="Acid proteases"/>
    <property type="match status" value="1"/>
</dbReference>
<dbReference type="SUPFAM" id="SSF56672">
    <property type="entry name" value="DNA/RNA polymerases"/>
    <property type="match status" value="1"/>
</dbReference>
<dbReference type="SUPFAM" id="SSF53098">
    <property type="entry name" value="Ribonuclease H-like"/>
    <property type="match status" value="2"/>
</dbReference>
<dbReference type="PROSITE" id="PS50175">
    <property type="entry name" value="ASP_PROT_RETROV"/>
    <property type="match status" value="1"/>
</dbReference>
<dbReference type="PROSITE" id="PS50994">
    <property type="entry name" value="INTEGRASE"/>
    <property type="match status" value="1"/>
</dbReference>
<dbReference type="PROSITE" id="PS50879">
    <property type="entry name" value="RNASE_H_1"/>
    <property type="match status" value="1"/>
</dbReference>
<dbReference type="PROSITE" id="PS50878">
    <property type="entry name" value="RT_POL"/>
    <property type="match status" value="1"/>
</dbReference>
<feature type="chain" id="PRO_0000125480" description="Gag-Pol polyprotein">
    <location>
        <begin position="1" status="less than"/>
        <end position="1152"/>
    </location>
</feature>
<feature type="chain" id="PRO_0000442467" description="Protease">
    <location>
        <begin position="1" status="less than"/>
        <end position="78"/>
    </location>
</feature>
<feature type="chain" id="PRO_0000442468" description="Reverse transcriptase/ribonuclease H">
    <location>
        <begin position="79"/>
        <end position="751"/>
    </location>
</feature>
<feature type="chain" id="PRO_0000442469" description="Integrase">
    <location>
        <begin position="752"/>
        <end position="1152"/>
    </location>
</feature>
<feature type="domain" description="Peptidase A2" evidence="2">
    <location>
        <begin position="1" status="less than"/>
        <end position="52"/>
    </location>
</feature>
<feature type="domain" description="Reverse transcriptase" evidence="3">
    <location>
        <begin position="158"/>
        <end position="351"/>
    </location>
</feature>
<feature type="domain" description="RNase H type-1" evidence="4">
    <location>
        <begin position="595"/>
        <end position="741"/>
    </location>
</feature>
<feature type="domain" description="Integrase catalytic" evidence="5">
    <location>
        <begin position="863"/>
        <end position="1020"/>
    </location>
</feature>
<feature type="region of interest" description="Disordered" evidence="6">
    <location>
        <begin position="1128"/>
        <end position="1152"/>
    </location>
</feature>
<feature type="binding site" evidence="3">
    <location>
        <position position="228"/>
    </location>
    <ligand>
        <name>Mg(2+)</name>
        <dbReference type="ChEBI" id="CHEBI:18420"/>
        <label>1</label>
        <note>catalytic</note>
    </ligand>
</feature>
<feature type="binding site" evidence="3">
    <location>
        <position position="302"/>
    </location>
    <ligand>
        <name>Mg(2+)</name>
        <dbReference type="ChEBI" id="CHEBI:18420"/>
        <label>1</label>
        <note>catalytic</note>
    </ligand>
</feature>
<feature type="binding site" evidence="3">
    <location>
        <position position="303"/>
    </location>
    <ligand>
        <name>Mg(2+)</name>
        <dbReference type="ChEBI" id="CHEBI:18420"/>
        <label>1</label>
        <note>catalytic</note>
    </ligand>
</feature>
<feature type="binding site" evidence="4">
    <location>
        <position position="604"/>
    </location>
    <ligand>
        <name>Mg(2+)</name>
        <dbReference type="ChEBI" id="CHEBI:18420"/>
        <label>2</label>
    </ligand>
</feature>
<feature type="binding site" evidence="4">
    <location>
        <position position="642"/>
    </location>
    <ligand>
        <name>Mg(2+)</name>
        <dbReference type="ChEBI" id="CHEBI:18420"/>
        <label>2</label>
    </ligand>
</feature>
<feature type="binding site" evidence="4">
    <location>
        <position position="663"/>
    </location>
    <ligand>
        <name>Mg(2+)</name>
        <dbReference type="ChEBI" id="CHEBI:18420"/>
        <label>2</label>
    </ligand>
</feature>
<feature type="binding site" evidence="4">
    <location>
        <position position="733"/>
    </location>
    <ligand>
        <name>Mg(2+)</name>
        <dbReference type="ChEBI" id="CHEBI:18420"/>
        <label>2</label>
    </ligand>
</feature>
<feature type="binding site" evidence="5">
    <location>
        <position position="874"/>
    </location>
    <ligand>
        <name>Mg(2+)</name>
        <dbReference type="ChEBI" id="CHEBI:18420"/>
        <label>3</label>
        <note>catalytic</note>
    </ligand>
</feature>
<feature type="binding site" evidence="5">
    <location>
        <position position="933"/>
    </location>
    <ligand>
        <name>Mg(2+)</name>
        <dbReference type="ChEBI" id="CHEBI:18420"/>
        <label>3</label>
        <note>catalytic</note>
    </ligand>
</feature>
<feature type="site" description="Cleavage; by viral protease" evidence="1">
    <location>
        <begin position="78"/>
        <end position="79"/>
    </location>
</feature>
<feature type="site" description="Cleavage; by viral protease" evidence="1">
    <location>
        <begin position="751"/>
        <end position="752"/>
    </location>
</feature>
<feature type="sequence variant" evidence="8">
    <original>G</original>
    <variation>E</variation>
    <location>
        <position position="688"/>
    </location>
</feature>
<feature type="sequence variant" evidence="8">
    <original>N</original>
    <variation>H</variation>
    <location>
        <position position="766"/>
    </location>
</feature>
<feature type="sequence variant" evidence="8">
    <original>P</original>
    <variation>S</variation>
    <location>
        <position position="781"/>
    </location>
</feature>
<feature type="sequence variant" evidence="8">
    <original>L</original>
    <variation>P</variation>
    <location>
        <position position="826"/>
    </location>
</feature>
<feature type="sequence variant" evidence="8">
    <original>G</original>
    <variation>R</variation>
    <location>
        <position position="850"/>
    </location>
</feature>
<feature type="sequence variant" evidence="8">
    <original>H</original>
    <variation>L</variation>
    <location>
        <position position="918"/>
    </location>
</feature>
<feature type="sequence variant" evidence="8">
    <original>V</original>
    <variation>A</variation>
    <location>
        <position position="1111"/>
    </location>
</feature>
<feature type="sequence conflict" description="In Ref. 2; CAA25685." evidence="8" ref="2">
    <original>ERG</original>
    <variation>KGE</variation>
    <location>
        <begin position="680"/>
        <end position="682"/>
    </location>
</feature>
<feature type="non-terminal residue">
    <location>
        <position position="1"/>
    </location>
</feature>